<feature type="chain" id="PRO_0000185583" description="L-threonine dehydratase catabolic TdcB">
    <location>
        <begin position="1"/>
        <end position="329"/>
    </location>
</feature>
<feature type="binding site" evidence="1">
    <location>
        <begin position="53"/>
        <end position="54"/>
    </location>
    <ligand>
        <name>AMP</name>
        <dbReference type="ChEBI" id="CHEBI:456215"/>
    </ligand>
</feature>
<feature type="binding site" evidence="1">
    <location>
        <position position="88"/>
    </location>
    <ligand>
        <name>AMP</name>
        <dbReference type="ChEBI" id="CHEBI:456215"/>
    </ligand>
</feature>
<feature type="binding site" evidence="1">
    <location>
        <begin position="119"/>
        <end position="120"/>
    </location>
    <ligand>
        <name>AMP</name>
        <dbReference type="ChEBI" id="CHEBI:456215"/>
    </ligand>
</feature>
<feature type="binding site" evidence="1">
    <location>
        <position position="314"/>
    </location>
    <ligand>
        <name>AMP</name>
        <dbReference type="ChEBI" id="CHEBI:456215"/>
    </ligand>
</feature>
<feature type="modified residue" description="N6-(pyridoxal phosphate)lysine" evidence="1">
    <location>
        <position position="58"/>
    </location>
</feature>
<sequence>MHITYDLPVAIDDIIEAKQRLAGRIYKTGMPRSNYFSERCKGEIFLKFENMQRTGSFKIRGAFNKLSSLTDAEKRKGVVACSAGNHAQGVSLSCAMLGIDGKVVMPKGAPKSKVAATCDYSAEVVLHGDNFNDTIAKVSEIVEMEGRIFIPPYDDPKVIAGQGTIGLEIMEDLYDVDNVIVPIGGGGLIAGIAVAIKSINPTIRVIGVQSENVHGMAASFHSGEITTHRTTGTLADGCDVSRPGNLTYEIVRELVDDIVLVSEDEIRNSMIALIQRNKVVTEGAGALACAALLSGKLDQYIQNRKTVSIISGGNIDLSRVSQITGFVDA</sequence>
<dbReference type="EC" id="4.3.1.19"/>
<dbReference type="EC" id="4.3.1.17"/>
<dbReference type="EMBL" id="AE005174">
    <property type="protein sequence ID" value="AAG58248.1"/>
    <property type="molecule type" value="Genomic_DNA"/>
</dbReference>
<dbReference type="EMBL" id="BA000007">
    <property type="protein sequence ID" value="BAB37420.1"/>
    <property type="molecule type" value="Genomic_DNA"/>
</dbReference>
<dbReference type="PIR" id="D85973">
    <property type="entry name" value="D85973"/>
</dbReference>
<dbReference type="PIR" id="E91128">
    <property type="entry name" value="E91128"/>
</dbReference>
<dbReference type="RefSeq" id="NP_312024.1">
    <property type="nucleotide sequence ID" value="NC_002695.1"/>
</dbReference>
<dbReference type="RefSeq" id="WP_000548347.1">
    <property type="nucleotide sequence ID" value="NZ_VOAI01000009.1"/>
</dbReference>
<dbReference type="SMR" id="P0AGF8"/>
<dbReference type="STRING" id="155864.Z4469"/>
<dbReference type="GeneID" id="75205074"/>
<dbReference type="GeneID" id="916167"/>
<dbReference type="KEGG" id="ece:Z4469"/>
<dbReference type="KEGG" id="ecs:ECs_3997"/>
<dbReference type="PATRIC" id="fig|386585.9.peg.4171"/>
<dbReference type="eggNOG" id="COG1171">
    <property type="taxonomic scope" value="Bacteria"/>
</dbReference>
<dbReference type="HOGENOM" id="CLU_021152_4_2_6"/>
<dbReference type="OMA" id="LIHPFDH"/>
<dbReference type="UniPathway" id="UPA00052">
    <property type="reaction ID" value="UER00507"/>
</dbReference>
<dbReference type="Proteomes" id="UP000000558">
    <property type="component" value="Chromosome"/>
</dbReference>
<dbReference type="Proteomes" id="UP000002519">
    <property type="component" value="Chromosome"/>
</dbReference>
<dbReference type="GO" id="GO:0003941">
    <property type="term" value="F:L-serine ammonia-lyase activity"/>
    <property type="evidence" value="ECO:0007669"/>
    <property type="project" value="UniProtKB-EC"/>
</dbReference>
<dbReference type="GO" id="GO:0000166">
    <property type="term" value="F:nucleotide binding"/>
    <property type="evidence" value="ECO:0007669"/>
    <property type="project" value="UniProtKB-KW"/>
</dbReference>
<dbReference type="GO" id="GO:0030170">
    <property type="term" value="F:pyridoxal phosphate binding"/>
    <property type="evidence" value="ECO:0007669"/>
    <property type="project" value="InterPro"/>
</dbReference>
<dbReference type="GO" id="GO:0004794">
    <property type="term" value="F:threonine deaminase activity"/>
    <property type="evidence" value="ECO:0007669"/>
    <property type="project" value="UniProtKB-EC"/>
</dbReference>
<dbReference type="GO" id="GO:0009097">
    <property type="term" value="P:isoleucine biosynthetic process"/>
    <property type="evidence" value="ECO:0007669"/>
    <property type="project" value="TreeGrafter"/>
</dbReference>
<dbReference type="GO" id="GO:0006565">
    <property type="term" value="P:L-serine catabolic process"/>
    <property type="evidence" value="ECO:0007669"/>
    <property type="project" value="TreeGrafter"/>
</dbReference>
<dbReference type="GO" id="GO:0070689">
    <property type="term" value="P:L-threonine catabolic process to propionate"/>
    <property type="evidence" value="ECO:0007669"/>
    <property type="project" value="UniProtKB-UniPathway"/>
</dbReference>
<dbReference type="CDD" id="cd01562">
    <property type="entry name" value="Thr-dehyd"/>
    <property type="match status" value="1"/>
</dbReference>
<dbReference type="FunFam" id="3.40.50.1100:FF:000007">
    <property type="entry name" value="L-threonine dehydratase catabolic TdcB"/>
    <property type="match status" value="1"/>
</dbReference>
<dbReference type="FunFam" id="3.40.50.1100:FF:000005">
    <property type="entry name" value="Threonine dehydratase catabolic"/>
    <property type="match status" value="1"/>
</dbReference>
<dbReference type="Gene3D" id="3.40.50.1100">
    <property type="match status" value="2"/>
</dbReference>
<dbReference type="InterPro" id="IPR050147">
    <property type="entry name" value="Ser/Thr_Dehydratase"/>
</dbReference>
<dbReference type="InterPro" id="IPR000634">
    <property type="entry name" value="Ser/Thr_deHydtase_PyrdxlP-BS"/>
</dbReference>
<dbReference type="InterPro" id="IPR005789">
    <property type="entry name" value="Thr_deHydtase_catblc"/>
</dbReference>
<dbReference type="InterPro" id="IPR001926">
    <property type="entry name" value="TrpB-like_PALP"/>
</dbReference>
<dbReference type="InterPro" id="IPR036052">
    <property type="entry name" value="TrpB-like_PALP_sf"/>
</dbReference>
<dbReference type="NCBIfam" id="TIGR01127">
    <property type="entry name" value="ilvA_1Cterm"/>
    <property type="match status" value="1"/>
</dbReference>
<dbReference type="NCBIfam" id="NF006389">
    <property type="entry name" value="PRK08638.1"/>
    <property type="match status" value="1"/>
</dbReference>
<dbReference type="PANTHER" id="PTHR48078:SF6">
    <property type="entry name" value="L-THREONINE DEHYDRATASE CATABOLIC TDCB"/>
    <property type="match status" value="1"/>
</dbReference>
<dbReference type="PANTHER" id="PTHR48078">
    <property type="entry name" value="THREONINE DEHYDRATASE, MITOCHONDRIAL-RELATED"/>
    <property type="match status" value="1"/>
</dbReference>
<dbReference type="Pfam" id="PF00291">
    <property type="entry name" value="PALP"/>
    <property type="match status" value="1"/>
</dbReference>
<dbReference type="SUPFAM" id="SSF53686">
    <property type="entry name" value="Tryptophan synthase beta subunit-like PLP-dependent enzymes"/>
    <property type="match status" value="1"/>
</dbReference>
<dbReference type="PROSITE" id="PS00165">
    <property type="entry name" value="DEHYDRATASE_SER_THR"/>
    <property type="match status" value="1"/>
</dbReference>
<proteinExistence type="inferred from homology"/>
<protein>
    <recommendedName>
        <fullName>L-threonine dehydratase catabolic TdcB</fullName>
        <ecNumber>4.3.1.19</ecNumber>
    </recommendedName>
    <alternativeName>
        <fullName>L-serine dehydratase</fullName>
        <ecNumber>4.3.1.17</ecNumber>
    </alternativeName>
    <alternativeName>
        <fullName>Threonine deaminase</fullName>
    </alternativeName>
</protein>
<accession>P0AGF8</accession>
<accession>P05792</accession>
<name>TDCB_ECO57</name>
<comment type="function">
    <text evidence="1">Catalyzes the anaerobic formation of alpha-ketobutyrate and ammonia from threonine in a two-step reaction. The first step involved a dehydration of threonine and a production of enamine intermediates (aminocrotonate), which tautomerizes to its imine form (iminobutyrate). Both intermediates are unstable and short-lived. The second step is the nonenzymatic hydrolysis of the enamine/imine intermediates to form 2-ketobutyrate and free ammonia. In the low water environment of the cell, the second step is accelerated by RidA. TdcB also dehydrates serine to yield pyruvate via analogous enamine/imine intermediates (By similarity).</text>
</comment>
<comment type="catalytic activity">
    <reaction>
        <text>L-threonine = 2-oxobutanoate + NH4(+)</text>
        <dbReference type="Rhea" id="RHEA:22108"/>
        <dbReference type="ChEBI" id="CHEBI:16763"/>
        <dbReference type="ChEBI" id="CHEBI:28938"/>
        <dbReference type="ChEBI" id="CHEBI:57926"/>
        <dbReference type="EC" id="4.3.1.19"/>
    </reaction>
</comment>
<comment type="catalytic activity">
    <reaction>
        <text>L-serine = pyruvate + NH4(+)</text>
        <dbReference type="Rhea" id="RHEA:19169"/>
        <dbReference type="ChEBI" id="CHEBI:15361"/>
        <dbReference type="ChEBI" id="CHEBI:28938"/>
        <dbReference type="ChEBI" id="CHEBI:33384"/>
        <dbReference type="EC" id="4.3.1.17"/>
    </reaction>
</comment>
<comment type="cofactor">
    <cofactor evidence="1">
        <name>pyridoxal 5'-phosphate</name>
        <dbReference type="ChEBI" id="CHEBI:597326"/>
    </cofactor>
</comment>
<comment type="activity regulation">
    <text evidence="1">Each protein molecule can bind up to four molecules of AMP, which act as an allosteric activator to the enzyme.</text>
</comment>
<comment type="pathway">
    <text>Amino-acid degradation; L-threonine degradation via propanoate pathway; propanoate from L-threonine: step 1/4.</text>
</comment>
<comment type="subunit">
    <text evidence="1">In the native structure, TdcB is in a dimeric form, whereas in the TdcB-AMP complex, it exists in a tetrameric form (dimer of dimers).</text>
</comment>
<comment type="similarity">
    <text evidence="2">Belongs to the serine/threonine dehydratase family.</text>
</comment>
<gene>
    <name type="primary">tdcB</name>
    <name type="ordered locus">Z4469</name>
    <name type="ordered locus">ECs3997</name>
</gene>
<reference key="1">
    <citation type="journal article" date="2001" name="Nature">
        <title>Genome sequence of enterohaemorrhagic Escherichia coli O157:H7.</title>
        <authorList>
            <person name="Perna N.T."/>
            <person name="Plunkett G. III"/>
            <person name="Burland V."/>
            <person name="Mau B."/>
            <person name="Glasner J.D."/>
            <person name="Rose D.J."/>
            <person name="Mayhew G.F."/>
            <person name="Evans P.S."/>
            <person name="Gregor J."/>
            <person name="Kirkpatrick H.A."/>
            <person name="Posfai G."/>
            <person name="Hackett J."/>
            <person name="Klink S."/>
            <person name="Boutin A."/>
            <person name="Shao Y."/>
            <person name="Miller L."/>
            <person name="Grotbeck E.J."/>
            <person name="Davis N.W."/>
            <person name="Lim A."/>
            <person name="Dimalanta E.T."/>
            <person name="Potamousis K."/>
            <person name="Apodaca J."/>
            <person name="Anantharaman T.S."/>
            <person name="Lin J."/>
            <person name="Yen G."/>
            <person name="Schwartz D.C."/>
            <person name="Welch R.A."/>
            <person name="Blattner F.R."/>
        </authorList>
    </citation>
    <scope>NUCLEOTIDE SEQUENCE [LARGE SCALE GENOMIC DNA]</scope>
    <source>
        <strain>O157:H7 / EDL933 / ATCC 700927 / EHEC</strain>
    </source>
</reference>
<reference key="2">
    <citation type="journal article" date="2001" name="DNA Res.">
        <title>Complete genome sequence of enterohemorrhagic Escherichia coli O157:H7 and genomic comparison with a laboratory strain K-12.</title>
        <authorList>
            <person name="Hayashi T."/>
            <person name="Makino K."/>
            <person name="Ohnishi M."/>
            <person name="Kurokawa K."/>
            <person name="Ishii K."/>
            <person name="Yokoyama K."/>
            <person name="Han C.-G."/>
            <person name="Ohtsubo E."/>
            <person name="Nakayama K."/>
            <person name="Murata T."/>
            <person name="Tanaka M."/>
            <person name="Tobe T."/>
            <person name="Iida T."/>
            <person name="Takami H."/>
            <person name="Honda T."/>
            <person name="Sasakawa C."/>
            <person name="Ogasawara N."/>
            <person name="Yasunaga T."/>
            <person name="Kuhara S."/>
            <person name="Shiba T."/>
            <person name="Hattori M."/>
            <person name="Shinagawa H."/>
        </authorList>
    </citation>
    <scope>NUCLEOTIDE SEQUENCE [LARGE SCALE GENOMIC DNA]</scope>
    <source>
        <strain>O157:H7 / Sakai / RIMD 0509952 / EHEC</strain>
    </source>
</reference>
<keyword id="KW-0021">Allosteric enzyme</keyword>
<keyword id="KW-0456">Lyase</keyword>
<keyword id="KW-0547">Nucleotide-binding</keyword>
<keyword id="KW-0663">Pyridoxal phosphate</keyword>
<keyword id="KW-1185">Reference proteome</keyword>
<evidence type="ECO:0000250" key="1"/>
<evidence type="ECO:0000305" key="2"/>
<organism>
    <name type="scientific">Escherichia coli O157:H7</name>
    <dbReference type="NCBI Taxonomy" id="83334"/>
    <lineage>
        <taxon>Bacteria</taxon>
        <taxon>Pseudomonadati</taxon>
        <taxon>Pseudomonadota</taxon>
        <taxon>Gammaproteobacteria</taxon>
        <taxon>Enterobacterales</taxon>
        <taxon>Enterobacteriaceae</taxon>
        <taxon>Escherichia</taxon>
    </lineage>
</organism>